<dbReference type="EC" id="5.4.2.7" evidence="1"/>
<dbReference type="EMBL" id="BA000003">
    <property type="protein sequence ID" value="BAB13234.1"/>
    <property type="molecule type" value="Genomic_DNA"/>
</dbReference>
<dbReference type="RefSeq" id="NP_240348.1">
    <property type="nucleotide sequence ID" value="NC_002528.1"/>
</dbReference>
<dbReference type="RefSeq" id="WP_010896155.1">
    <property type="nucleotide sequence ID" value="NC_002528.1"/>
</dbReference>
<dbReference type="SMR" id="P57607"/>
<dbReference type="STRING" id="563178.BUAP5A_535"/>
<dbReference type="EnsemblBacteria" id="BAB13234">
    <property type="protein sequence ID" value="BAB13234"/>
    <property type="gene ID" value="BAB13234"/>
</dbReference>
<dbReference type="KEGG" id="buc:BU542"/>
<dbReference type="PATRIC" id="fig|107806.10.peg.546"/>
<dbReference type="eggNOG" id="COG1015">
    <property type="taxonomic scope" value="Bacteria"/>
</dbReference>
<dbReference type="HOGENOM" id="CLU_053861_0_0_6"/>
<dbReference type="UniPathway" id="UPA00002">
    <property type="reaction ID" value="UER00467"/>
</dbReference>
<dbReference type="Proteomes" id="UP000001806">
    <property type="component" value="Chromosome"/>
</dbReference>
<dbReference type="GO" id="GO:0005829">
    <property type="term" value="C:cytosol"/>
    <property type="evidence" value="ECO:0007669"/>
    <property type="project" value="TreeGrafter"/>
</dbReference>
<dbReference type="GO" id="GO:0000287">
    <property type="term" value="F:magnesium ion binding"/>
    <property type="evidence" value="ECO:0007669"/>
    <property type="project" value="InterPro"/>
</dbReference>
<dbReference type="GO" id="GO:0030145">
    <property type="term" value="F:manganese ion binding"/>
    <property type="evidence" value="ECO:0007669"/>
    <property type="project" value="UniProtKB-UniRule"/>
</dbReference>
<dbReference type="GO" id="GO:0008973">
    <property type="term" value="F:phosphopentomutase activity"/>
    <property type="evidence" value="ECO:0007669"/>
    <property type="project" value="UniProtKB-UniRule"/>
</dbReference>
<dbReference type="GO" id="GO:0006018">
    <property type="term" value="P:2-deoxyribose 1-phosphate catabolic process"/>
    <property type="evidence" value="ECO:0007669"/>
    <property type="project" value="UniProtKB-UniRule"/>
</dbReference>
<dbReference type="GO" id="GO:0006015">
    <property type="term" value="P:5-phosphoribose 1-diphosphate biosynthetic process"/>
    <property type="evidence" value="ECO:0007669"/>
    <property type="project" value="UniProtKB-UniPathway"/>
</dbReference>
<dbReference type="GO" id="GO:0043094">
    <property type="term" value="P:metabolic compound salvage"/>
    <property type="evidence" value="ECO:0007669"/>
    <property type="project" value="InterPro"/>
</dbReference>
<dbReference type="GO" id="GO:0009117">
    <property type="term" value="P:nucleotide metabolic process"/>
    <property type="evidence" value="ECO:0007669"/>
    <property type="project" value="InterPro"/>
</dbReference>
<dbReference type="CDD" id="cd16009">
    <property type="entry name" value="PPM"/>
    <property type="match status" value="1"/>
</dbReference>
<dbReference type="FunFam" id="3.30.70.1250:FF:000001">
    <property type="entry name" value="Phosphopentomutase"/>
    <property type="match status" value="1"/>
</dbReference>
<dbReference type="Gene3D" id="3.40.720.10">
    <property type="entry name" value="Alkaline Phosphatase, subunit A"/>
    <property type="match status" value="1"/>
</dbReference>
<dbReference type="Gene3D" id="3.30.70.1250">
    <property type="entry name" value="Phosphopentomutase"/>
    <property type="match status" value="1"/>
</dbReference>
<dbReference type="HAMAP" id="MF_00740">
    <property type="entry name" value="Phosphopentomut"/>
    <property type="match status" value="1"/>
</dbReference>
<dbReference type="InterPro" id="IPR017850">
    <property type="entry name" value="Alkaline_phosphatase_core_sf"/>
</dbReference>
<dbReference type="InterPro" id="IPR010045">
    <property type="entry name" value="DeoB"/>
</dbReference>
<dbReference type="InterPro" id="IPR006124">
    <property type="entry name" value="Metalloenzyme"/>
</dbReference>
<dbReference type="InterPro" id="IPR024052">
    <property type="entry name" value="Phosphopentomutase_DeoB_cap_sf"/>
</dbReference>
<dbReference type="NCBIfam" id="TIGR01696">
    <property type="entry name" value="deoB"/>
    <property type="match status" value="1"/>
</dbReference>
<dbReference type="NCBIfam" id="NF003766">
    <property type="entry name" value="PRK05362.1"/>
    <property type="match status" value="1"/>
</dbReference>
<dbReference type="PANTHER" id="PTHR21110">
    <property type="entry name" value="PHOSPHOPENTOMUTASE"/>
    <property type="match status" value="1"/>
</dbReference>
<dbReference type="PANTHER" id="PTHR21110:SF0">
    <property type="entry name" value="PHOSPHOPENTOMUTASE"/>
    <property type="match status" value="1"/>
</dbReference>
<dbReference type="Pfam" id="PF01676">
    <property type="entry name" value="Metalloenzyme"/>
    <property type="match status" value="1"/>
</dbReference>
<dbReference type="PIRSF" id="PIRSF001491">
    <property type="entry name" value="Ppentomutase"/>
    <property type="match status" value="1"/>
</dbReference>
<dbReference type="SUPFAM" id="SSF53649">
    <property type="entry name" value="Alkaline phosphatase-like"/>
    <property type="match status" value="1"/>
</dbReference>
<dbReference type="SUPFAM" id="SSF143856">
    <property type="entry name" value="DeoB insert domain-like"/>
    <property type="match status" value="1"/>
</dbReference>
<name>DEOB_BUCAI</name>
<feature type="chain" id="PRO_0000199811" description="Phosphopentomutase">
    <location>
        <begin position="1"/>
        <end position="407"/>
    </location>
</feature>
<feature type="binding site" evidence="1">
    <location>
        <position position="10"/>
    </location>
    <ligand>
        <name>Mn(2+)</name>
        <dbReference type="ChEBI" id="CHEBI:29035"/>
        <label>1</label>
    </ligand>
</feature>
<feature type="binding site" evidence="1">
    <location>
        <position position="306"/>
    </location>
    <ligand>
        <name>Mn(2+)</name>
        <dbReference type="ChEBI" id="CHEBI:29035"/>
        <label>2</label>
    </ligand>
</feature>
<feature type="binding site" evidence="1">
    <location>
        <position position="311"/>
    </location>
    <ligand>
        <name>Mn(2+)</name>
        <dbReference type="ChEBI" id="CHEBI:29035"/>
        <label>2</label>
    </ligand>
</feature>
<feature type="binding site" evidence="1">
    <location>
        <position position="347"/>
    </location>
    <ligand>
        <name>Mn(2+)</name>
        <dbReference type="ChEBI" id="CHEBI:29035"/>
        <label>1</label>
    </ligand>
</feature>
<feature type="binding site" evidence="1">
    <location>
        <position position="348"/>
    </location>
    <ligand>
        <name>Mn(2+)</name>
        <dbReference type="ChEBI" id="CHEBI:29035"/>
        <label>1</label>
    </ligand>
</feature>
<feature type="binding site" evidence="1">
    <location>
        <position position="359"/>
    </location>
    <ligand>
        <name>Mn(2+)</name>
        <dbReference type="ChEBI" id="CHEBI:29035"/>
        <label>2</label>
    </ligand>
</feature>
<comment type="function">
    <text evidence="1">Isomerase that catalyzes the conversion of deoxy-ribose 1-phosphate (dRib-1-P) and ribose 1-phosphate (Rib-1-P) to deoxy-ribose 5-phosphate (dRib-5-P) and ribose 5-phosphate (Rib-5-P), respectively.</text>
</comment>
<comment type="catalytic activity">
    <reaction evidence="1">
        <text>2-deoxy-alpha-D-ribose 1-phosphate = 2-deoxy-D-ribose 5-phosphate</text>
        <dbReference type="Rhea" id="RHEA:27658"/>
        <dbReference type="ChEBI" id="CHEBI:57259"/>
        <dbReference type="ChEBI" id="CHEBI:62877"/>
        <dbReference type="EC" id="5.4.2.7"/>
    </reaction>
</comment>
<comment type="catalytic activity">
    <reaction evidence="1">
        <text>alpha-D-ribose 1-phosphate = D-ribose 5-phosphate</text>
        <dbReference type="Rhea" id="RHEA:18793"/>
        <dbReference type="ChEBI" id="CHEBI:57720"/>
        <dbReference type="ChEBI" id="CHEBI:78346"/>
        <dbReference type="EC" id="5.4.2.7"/>
    </reaction>
</comment>
<comment type="cofactor">
    <cofactor evidence="1">
        <name>Mn(2+)</name>
        <dbReference type="ChEBI" id="CHEBI:29035"/>
    </cofactor>
    <text evidence="1">Binds 2 manganese ions.</text>
</comment>
<comment type="pathway">
    <text evidence="1">Carbohydrate degradation; 2-deoxy-D-ribose 1-phosphate degradation; D-glyceraldehyde 3-phosphate and acetaldehyde from 2-deoxy-alpha-D-ribose 1-phosphate: step 1/2.</text>
</comment>
<comment type="subcellular location">
    <subcellularLocation>
        <location evidence="1">Cytoplasm</location>
    </subcellularLocation>
</comment>
<comment type="similarity">
    <text evidence="1">Belongs to the phosphopentomutase family.</text>
</comment>
<organism>
    <name type="scientific">Buchnera aphidicola subsp. Acyrthosiphon pisum (strain APS)</name>
    <name type="common">Acyrthosiphon pisum symbiotic bacterium</name>
    <dbReference type="NCBI Taxonomy" id="107806"/>
    <lineage>
        <taxon>Bacteria</taxon>
        <taxon>Pseudomonadati</taxon>
        <taxon>Pseudomonadota</taxon>
        <taxon>Gammaproteobacteria</taxon>
        <taxon>Enterobacterales</taxon>
        <taxon>Erwiniaceae</taxon>
        <taxon>Buchnera</taxon>
    </lineage>
</organism>
<gene>
    <name evidence="1" type="primary">deoB</name>
    <name type="ordered locus">BU542</name>
</gene>
<accession>P57607</accession>
<proteinExistence type="inferred from homology"/>
<sequence>MKRVFLIVLDSFGIGSSPDADKFNDVGSNTFGHIVEKCFLGEANVGRKGVLCIPNLVKLGIINAAKESTGQYPLGFNYSSNVIASYGFASEISSGKDTTSGHWEIAGVPVLDDWYYFKEKQNSFPESLLEKIIIRSELTGFIGNCHASGTDIISRLGEEHIQTKKPIVYTSSDSVFQIACHEEFFGLSNLYKLCKTVRFILDRYNYKVARVIARPFIGNDKLQFQRTGNRRDFSIKPFATTVIKKLIDEKQGQVIAIGKVSDIYGGIGISKNIKSTGLYELCSTTIHEMKKALNNTIVFTNLVDFDSNWGHRRDVSGYAKGLELFDSRLSEIISLVQKNDLLILTADHGCDPTWIGTDHTRENVPVLIYSPGIKKNFLGHRKTFADIGQTIAKYFLLTDMSYGQNML</sequence>
<reference key="1">
    <citation type="journal article" date="2000" name="Nature">
        <title>Genome sequence of the endocellular bacterial symbiont of aphids Buchnera sp. APS.</title>
        <authorList>
            <person name="Shigenobu S."/>
            <person name="Watanabe H."/>
            <person name="Hattori M."/>
            <person name="Sakaki Y."/>
            <person name="Ishikawa H."/>
        </authorList>
    </citation>
    <scope>NUCLEOTIDE SEQUENCE [LARGE SCALE GENOMIC DNA]</scope>
    <source>
        <strain>APS</strain>
    </source>
</reference>
<evidence type="ECO:0000255" key="1">
    <source>
        <dbReference type="HAMAP-Rule" id="MF_00740"/>
    </source>
</evidence>
<protein>
    <recommendedName>
        <fullName evidence="1">Phosphopentomutase</fullName>
        <ecNumber evidence="1">5.4.2.7</ecNumber>
    </recommendedName>
    <alternativeName>
        <fullName evidence="1">Phosphodeoxyribomutase</fullName>
    </alternativeName>
</protein>
<keyword id="KW-0963">Cytoplasm</keyword>
<keyword id="KW-0413">Isomerase</keyword>
<keyword id="KW-0464">Manganese</keyword>
<keyword id="KW-0479">Metal-binding</keyword>
<keyword id="KW-1185">Reference proteome</keyword>